<organism>
    <name type="scientific">Chlamydia muridarum (strain MoPn / Nigg)</name>
    <dbReference type="NCBI Taxonomy" id="243161"/>
    <lineage>
        <taxon>Bacteria</taxon>
        <taxon>Pseudomonadati</taxon>
        <taxon>Chlamydiota</taxon>
        <taxon>Chlamydiia</taxon>
        <taxon>Chlamydiales</taxon>
        <taxon>Chlamydiaceae</taxon>
        <taxon>Chlamydia/Chlamydophila group</taxon>
        <taxon>Chlamydia</taxon>
    </lineage>
</organism>
<sequence length="346" mass="40488">MQADILDGKQKRVNLNSKRLVNCNQVDVNQLVPIKYKWAWEHYLNGCANNWLPTEISMGKDIELWKSNVLSEDERRVILLNLGFFSTAESLVGNNIVLAIFKHVTNPEARQYLLRQAFEEAVHTHTFLYICESLGLDEKEIFNAYNERASIKAKDDFQMEITGKVLDPNFRTDSVEGLQEFIKNLVGYYIIMEGIFFYSGFVMILSFHRQNKMVGIGEQYQYILRDETIHLNFGVDLINGIKEENPEIWTTELQQEIIEMIQRAVDLEIDYARDCLPRGILGLRASMFIDYVQHIADRRLERIGLKPIYHTKNPFPWMSETIDLNKEKNFFETRVTEYQHAASLTW</sequence>
<feature type="chain" id="PRO_0000190473" description="Ribonucleoside-diphosphate reductase subunit beta">
    <location>
        <begin position="1"/>
        <end position="346"/>
    </location>
</feature>
<feature type="active site" evidence="1">
    <location>
        <position position="129"/>
    </location>
</feature>
<feature type="binding site" evidence="1">
    <location>
        <position position="89"/>
    </location>
    <ligand>
        <name>Fe cation</name>
        <dbReference type="ChEBI" id="CHEBI:24875"/>
        <label>1</label>
    </ligand>
</feature>
<feature type="binding site" evidence="1">
    <location>
        <position position="120"/>
    </location>
    <ligand>
        <name>Fe cation</name>
        <dbReference type="ChEBI" id="CHEBI:24875"/>
        <label>1</label>
    </ligand>
</feature>
<feature type="binding site" evidence="1">
    <location>
        <position position="120"/>
    </location>
    <ligand>
        <name>Fe cation</name>
        <dbReference type="ChEBI" id="CHEBI:24875"/>
        <label>2</label>
    </ligand>
</feature>
<feature type="binding site" evidence="1">
    <location>
        <position position="123"/>
    </location>
    <ligand>
        <name>Fe cation</name>
        <dbReference type="ChEBI" id="CHEBI:24875"/>
        <label>1</label>
    </ligand>
</feature>
<feature type="binding site" evidence="1">
    <location>
        <position position="193"/>
    </location>
    <ligand>
        <name>Fe cation</name>
        <dbReference type="ChEBI" id="CHEBI:24875"/>
        <label>2</label>
    </ligand>
</feature>
<feature type="binding site" evidence="1">
    <location>
        <position position="227"/>
    </location>
    <ligand>
        <name>Fe cation</name>
        <dbReference type="ChEBI" id="CHEBI:24875"/>
        <label>2</label>
    </ligand>
</feature>
<feature type="binding site" evidence="1">
    <location>
        <position position="230"/>
    </location>
    <ligand>
        <name>Fe cation</name>
        <dbReference type="ChEBI" id="CHEBI:24875"/>
        <label>2</label>
    </ligand>
</feature>
<gene>
    <name type="primary">nrdB</name>
    <name type="ordered locus">TC_0215</name>
</gene>
<dbReference type="EC" id="1.17.4.1"/>
<dbReference type="EMBL" id="AE002160">
    <property type="protein sequence ID" value="AAF39087.1"/>
    <property type="molecule type" value="Genomic_DNA"/>
</dbReference>
<dbReference type="PIR" id="G81728">
    <property type="entry name" value="G81728"/>
</dbReference>
<dbReference type="RefSeq" id="WP_010229839.1">
    <property type="nucleotide sequence ID" value="NZ_CP063055.1"/>
</dbReference>
<dbReference type="SMR" id="Q9PL92"/>
<dbReference type="GeneID" id="1246341"/>
<dbReference type="KEGG" id="cmu:TC_0215"/>
<dbReference type="eggNOG" id="COG0208">
    <property type="taxonomic scope" value="Bacteria"/>
</dbReference>
<dbReference type="HOGENOM" id="CLU_035339_1_1_0"/>
<dbReference type="OrthoDB" id="9766544at2"/>
<dbReference type="Proteomes" id="UP000000800">
    <property type="component" value="Chromosome"/>
</dbReference>
<dbReference type="GO" id="GO:0046872">
    <property type="term" value="F:metal ion binding"/>
    <property type="evidence" value="ECO:0007669"/>
    <property type="project" value="UniProtKB-KW"/>
</dbReference>
<dbReference type="GO" id="GO:0004748">
    <property type="term" value="F:ribonucleoside-diphosphate reductase activity, thioredoxin disulfide as acceptor"/>
    <property type="evidence" value="ECO:0007669"/>
    <property type="project" value="UniProtKB-EC"/>
</dbReference>
<dbReference type="GO" id="GO:0009263">
    <property type="term" value="P:deoxyribonucleotide biosynthetic process"/>
    <property type="evidence" value="ECO:0007669"/>
    <property type="project" value="UniProtKB-KW"/>
</dbReference>
<dbReference type="CDD" id="cd01049">
    <property type="entry name" value="RNRR2"/>
    <property type="match status" value="1"/>
</dbReference>
<dbReference type="Gene3D" id="1.10.620.20">
    <property type="entry name" value="Ribonucleotide Reductase, subunit A"/>
    <property type="match status" value="1"/>
</dbReference>
<dbReference type="InterPro" id="IPR009078">
    <property type="entry name" value="Ferritin-like_SF"/>
</dbReference>
<dbReference type="InterPro" id="IPR012348">
    <property type="entry name" value="RNR-like"/>
</dbReference>
<dbReference type="InterPro" id="IPR033909">
    <property type="entry name" value="RNR_small"/>
</dbReference>
<dbReference type="InterPro" id="IPR000358">
    <property type="entry name" value="RNR_small_fam"/>
</dbReference>
<dbReference type="NCBIfam" id="NF005550">
    <property type="entry name" value="PRK07209.1"/>
    <property type="match status" value="1"/>
</dbReference>
<dbReference type="NCBIfam" id="NF007186">
    <property type="entry name" value="PRK09614.1-5"/>
    <property type="match status" value="1"/>
</dbReference>
<dbReference type="PANTHER" id="PTHR23409">
    <property type="entry name" value="RIBONUCLEOSIDE-DIPHOSPHATE REDUCTASE SMALL CHAIN"/>
    <property type="match status" value="1"/>
</dbReference>
<dbReference type="PANTHER" id="PTHR23409:SF18">
    <property type="entry name" value="RIBONUCLEOSIDE-DIPHOSPHATE REDUCTASE SUBUNIT M2"/>
    <property type="match status" value="1"/>
</dbReference>
<dbReference type="Pfam" id="PF00268">
    <property type="entry name" value="Ribonuc_red_sm"/>
    <property type="match status" value="1"/>
</dbReference>
<dbReference type="PIRSF" id="PIRSF000355">
    <property type="entry name" value="NrdB"/>
    <property type="match status" value="1"/>
</dbReference>
<dbReference type="SUPFAM" id="SSF47240">
    <property type="entry name" value="Ferritin-like"/>
    <property type="match status" value="1"/>
</dbReference>
<keyword id="KW-0215">Deoxyribonucleotide synthesis</keyword>
<keyword id="KW-0408">Iron</keyword>
<keyword id="KW-0479">Metal-binding</keyword>
<keyword id="KW-0560">Oxidoreductase</keyword>
<evidence type="ECO:0000250" key="1"/>
<evidence type="ECO:0000305" key="2"/>
<accession>Q9PL92</accession>
<protein>
    <recommendedName>
        <fullName>Ribonucleoside-diphosphate reductase subunit beta</fullName>
        <ecNumber>1.17.4.1</ecNumber>
    </recommendedName>
    <alternativeName>
        <fullName>Ribonucleotide reductase small subunit</fullName>
    </alternativeName>
</protein>
<proteinExistence type="inferred from homology"/>
<reference key="1">
    <citation type="journal article" date="2000" name="Nucleic Acids Res.">
        <title>Genome sequences of Chlamydia trachomatis MoPn and Chlamydia pneumoniae AR39.</title>
        <authorList>
            <person name="Read T.D."/>
            <person name="Brunham R.C."/>
            <person name="Shen C."/>
            <person name="Gill S.R."/>
            <person name="Heidelberg J.F."/>
            <person name="White O."/>
            <person name="Hickey E.K."/>
            <person name="Peterson J.D."/>
            <person name="Utterback T.R."/>
            <person name="Berry K.J."/>
            <person name="Bass S."/>
            <person name="Linher K.D."/>
            <person name="Weidman J.F."/>
            <person name="Khouri H.M."/>
            <person name="Craven B."/>
            <person name="Bowman C."/>
            <person name="Dodson R.J."/>
            <person name="Gwinn M.L."/>
            <person name="Nelson W.C."/>
            <person name="DeBoy R.T."/>
            <person name="Kolonay J.F."/>
            <person name="McClarty G."/>
            <person name="Salzberg S.L."/>
            <person name="Eisen J.A."/>
            <person name="Fraser C.M."/>
        </authorList>
    </citation>
    <scope>NUCLEOTIDE SEQUENCE [LARGE SCALE GENOMIC DNA]</scope>
    <source>
        <strain>MoPn / Nigg</strain>
    </source>
</reference>
<name>RIR2_CHLMU</name>
<comment type="function">
    <text evidence="1">Provides the precursors necessary for DNA synthesis. Catalyzes the biosynthesis of deoxyribonucleotides from the corresponding ribonucleotides (By similarity).</text>
</comment>
<comment type="catalytic activity">
    <reaction>
        <text>a 2'-deoxyribonucleoside 5'-diphosphate + [thioredoxin]-disulfide + H2O = a ribonucleoside 5'-diphosphate + [thioredoxin]-dithiol</text>
        <dbReference type="Rhea" id="RHEA:23252"/>
        <dbReference type="Rhea" id="RHEA-COMP:10698"/>
        <dbReference type="Rhea" id="RHEA-COMP:10700"/>
        <dbReference type="ChEBI" id="CHEBI:15377"/>
        <dbReference type="ChEBI" id="CHEBI:29950"/>
        <dbReference type="ChEBI" id="CHEBI:50058"/>
        <dbReference type="ChEBI" id="CHEBI:57930"/>
        <dbReference type="ChEBI" id="CHEBI:73316"/>
        <dbReference type="EC" id="1.17.4.1"/>
    </reaction>
</comment>
<comment type="cofactor">
    <cofactor evidence="1">
        <name>Fe cation</name>
        <dbReference type="ChEBI" id="CHEBI:24875"/>
    </cofactor>
    <text evidence="1">Binds 2 iron ions per subunit.</text>
</comment>
<comment type="subunit">
    <text evidence="1">Tetramer of two alpha and two beta subunits.</text>
</comment>
<comment type="similarity">
    <text evidence="2">Belongs to the ribonucleoside diphosphate reductase small chain family.</text>
</comment>